<gene>
    <name evidence="1" type="primary">dut</name>
    <name type="ordered locus">CBU_0293</name>
</gene>
<accession>Q45920</accession>
<reference key="1">
    <citation type="submission" date="1994-05" db="EMBL/GenBank/DDBJ databases">
        <authorList>
            <person name="Thiele D."/>
            <person name="Willems H."/>
            <person name="Oswald W."/>
            <person name="Krauss H."/>
        </authorList>
    </citation>
    <scope>NUCLEOTIDE SEQUENCE [GENOMIC DNA]</scope>
    <source>
        <strain>Nine Mile phase I</strain>
    </source>
</reference>
<reference key="2">
    <citation type="journal article" date="2003" name="Proc. Natl. Acad. Sci. U.S.A.">
        <title>Complete genome sequence of the Q-fever pathogen, Coxiella burnetii.</title>
        <authorList>
            <person name="Seshadri R."/>
            <person name="Paulsen I.T."/>
            <person name="Eisen J.A."/>
            <person name="Read T.D."/>
            <person name="Nelson K.E."/>
            <person name="Nelson W.C."/>
            <person name="Ward N.L."/>
            <person name="Tettelin H."/>
            <person name="Davidsen T.M."/>
            <person name="Beanan M.J."/>
            <person name="DeBoy R.T."/>
            <person name="Daugherty S.C."/>
            <person name="Brinkac L.M."/>
            <person name="Madupu R."/>
            <person name="Dodson R.J."/>
            <person name="Khouri H.M."/>
            <person name="Lee K.H."/>
            <person name="Carty H.A."/>
            <person name="Scanlan D."/>
            <person name="Heinzen R.A."/>
            <person name="Thompson H.A."/>
            <person name="Samuel J.E."/>
            <person name="Fraser C.M."/>
            <person name="Heidelberg J.F."/>
        </authorList>
    </citation>
    <scope>NUCLEOTIDE SEQUENCE [LARGE SCALE GENOMIC DNA]</scope>
    <source>
        <strain>RSA 493 / Nine Mile phase I</strain>
    </source>
</reference>
<sequence length="152" mass="16214">MTHSVQLKILDKRLGSEFPLPAYATTGSAGLDLRACLDEPLKIEPDETCLISTGLAIYLGHSNVAATILPRSGLGHKHGIVLGNLVGLIDSDYQGPLMVSCWNRGKEPYTINPGDRIAQLVVLPILKAQFAVVEEFELTERGAGGFGSSGQN</sequence>
<proteinExistence type="evidence at protein level"/>
<protein>
    <recommendedName>
        <fullName evidence="1">Deoxyuridine 5'-triphosphate nucleotidohydrolase</fullName>
        <shortName evidence="1">dUTPase</shortName>
        <ecNumber evidence="1">3.6.1.23</ecNumber>
    </recommendedName>
    <alternativeName>
        <fullName evidence="1">dUTP pyrophosphatase</fullName>
    </alternativeName>
</protein>
<feature type="chain" id="PRO_0000182856" description="Deoxyuridine 5'-triphosphate nucleotidohydrolase">
    <location>
        <begin position="1"/>
        <end position="152"/>
    </location>
</feature>
<feature type="binding site" evidence="1">
    <location>
        <begin position="71"/>
        <end position="73"/>
    </location>
    <ligand>
        <name>substrate</name>
    </ligand>
</feature>
<feature type="binding site" evidence="1">
    <location>
        <position position="84"/>
    </location>
    <ligand>
        <name>substrate</name>
    </ligand>
</feature>
<feature type="binding site" evidence="1">
    <location>
        <begin position="88"/>
        <end position="90"/>
    </location>
    <ligand>
        <name>substrate</name>
    </ligand>
</feature>
<feature type="binding site" evidence="1">
    <location>
        <position position="98"/>
    </location>
    <ligand>
        <name>substrate</name>
    </ligand>
</feature>
<feature type="strand" evidence="3">
    <location>
        <begin position="6"/>
        <end position="9"/>
    </location>
</feature>
<feature type="turn" evidence="3">
    <location>
        <begin position="15"/>
        <end position="17"/>
    </location>
</feature>
<feature type="strand" evidence="3">
    <location>
        <begin position="29"/>
        <end position="34"/>
    </location>
</feature>
<feature type="strand" evidence="3">
    <location>
        <begin position="41"/>
        <end position="43"/>
    </location>
</feature>
<feature type="strand" evidence="3">
    <location>
        <begin position="48"/>
        <end position="58"/>
    </location>
</feature>
<feature type="strand" evidence="3">
    <location>
        <begin position="64"/>
        <end position="69"/>
    </location>
</feature>
<feature type="helix" evidence="3">
    <location>
        <begin position="72"/>
        <end position="78"/>
    </location>
</feature>
<feature type="strand" evidence="3">
    <location>
        <begin position="80"/>
        <end position="82"/>
    </location>
</feature>
<feature type="strand" evidence="3">
    <location>
        <begin position="85"/>
        <end position="89"/>
    </location>
</feature>
<feature type="strand" evidence="3">
    <location>
        <begin position="95"/>
        <end position="103"/>
    </location>
</feature>
<feature type="strand" evidence="3">
    <location>
        <begin position="105"/>
        <end position="107"/>
    </location>
</feature>
<feature type="strand" evidence="3">
    <location>
        <begin position="109"/>
        <end position="111"/>
    </location>
</feature>
<feature type="strand" evidence="3">
    <location>
        <begin position="116"/>
        <end position="124"/>
    </location>
</feature>
<dbReference type="EC" id="3.6.1.23" evidence="1"/>
<dbReference type="EMBL" id="X79075">
    <property type="protein sequence ID" value="CAA55678.1"/>
    <property type="molecule type" value="Genomic_DNA"/>
</dbReference>
<dbReference type="EMBL" id="AE016828">
    <property type="protein sequence ID" value="AAO89850.2"/>
    <property type="status" value="ALT_INIT"/>
    <property type="molecule type" value="Genomic_DNA"/>
</dbReference>
<dbReference type="PIR" id="S44300">
    <property type="entry name" value="S44300"/>
</dbReference>
<dbReference type="RefSeq" id="NP_819336.2">
    <property type="nucleotide sequence ID" value="NC_002971.3"/>
</dbReference>
<dbReference type="PDB" id="3TQZ">
    <property type="method" value="X-ray"/>
    <property type="resolution" value="1.75 A"/>
    <property type="chains" value="A=1-152"/>
</dbReference>
<dbReference type="PDBsum" id="3TQZ"/>
<dbReference type="SMR" id="Q45920"/>
<dbReference type="STRING" id="227377.CBU_0293"/>
<dbReference type="DNASU" id="1208175"/>
<dbReference type="EnsemblBacteria" id="AAO89850">
    <property type="protein sequence ID" value="AAO89850"/>
    <property type="gene ID" value="CBU_0293"/>
</dbReference>
<dbReference type="GeneID" id="1208175"/>
<dbReference type="KEGG" id="cbu:CBU_0293"/>
<dbReference type="PATRIC" id="fig|227377.7.peg.288"/>
<dbReference type="eggNOG" id="COG0756">
    <property type="taxonomic scope" value="Bacteria"/>
</dbReference>
<dbReference type="HOGENOM" id="CLU_068508_1_1_6"/>
<dbReference type="OrthoDB" id="9809956at2"/>
<dbReference type="UniPathway" id="UPA00610">
    <property type="reaction ID" value="UER00666"/>
</dbReference>
<dbReference type="EvolutionaryTrace" id="Q45920"/>
<dbReference type="Proteomes" id="UP000002671">
    <property type="component" value="Chromosome"/>
</dbReference>
<dbReference type="GO" id="GO:0004170">
    <property type="term" value="F:dUTP diphosphatase activity"/>
    <property type="evidence" value="ECO:0000318"/>
    <property type="project" value="GO_Central"/>
</dbReference>
<dbReference type="GO" id="GO:0000287">
    <property type="term" value="F:magnesium ion binding"/>
    <property type="evidence" value="ECO:0000318"/>
    <property type="project" value="GO_Central"/>
</dbReference>
<dbReference type="GO" id="GO:0006226">
    <property type="term" value="P:dUMP biosynthetic process"/>
    <property type="evidence" value="ECO:0000318"/>
    <property type="project" value="GO_Central"/>
</dbReference>
<dbReference type="GO" id="GO:0046081">
    <property type="term" value="P:dUTP catabolic process"/>
    <property type="evidence" value="ECO:0000318"/>
    <property type="project" value="GO_Central"/>
</dbReference>
<dbReference type="CDD" id="cd07557">
    <property type="entry name" value="trimeric_dUTPase"/>
    <property type="match status" value="1"/>
</dbReference>
<dbReference type="FunFam" id="2.70.40.10:FF:000002">
    <property type="entry name" value="dUTP diphosphatase"/>
    <property type="match status" value="1"/>
</dbReference>
<dbReference type="Gene3D" id="2.70.40.10">
    <property type="match status" value="1"/>
</dbReference>
<dbReference type="HAMAP" id="MF_00116">
    <property type="entry name" value="dUTPase_bact"/>
    <property type="match status" value="1"/>
</dbReference>
<dbReference type="InterPro" id="IPR008181">
    <property type="entry name" value="dUTPase"/>
</dbReference>
<dbReference type="InterPro" id="IPR029054">
    <property type="entry name" value="dUTPase-like"/>
</dbReference>
<dbReference type="InterPro" id="IPR036157">
    <property type="entry name" value="dUTPase-like_sf"/>
</dbReference>
<dbReference type="InterPro" id="IPR033704">
    <property type="entry name" value="dUTPase_trimeric"/>
</dbReference>
<dbReference type="NCBIfam" id="TIGR00576">
    <property type="entry name" value="dut"/>
    <property type="match status" value="1"/>
</dbReference>
<dbReference type="NCBIfam" id="NF001862">
    <property type="entry name" value="PRK00601.1"/>
    <property type="match status" value="1"/>
</dbReference>
<dbReference type="PANTHER" id="PTHR11241">
    <property type="entry name" value="DEOXYURIDINE 5'-TRIPHOSPHATE NUCLEOTIDOHYDROLASE"/>
    <property type="match status" value="1"/>
</dbReference>
<dbReference type="PANTHER" id="PTHR11241:SF0">
    <property type="entry name" value="DEOXYURIDINE 5'-TRIPHOSPHATE NUCLEOTIDOHYDROLASE"/>
    <property type="match status" value="1"/>
</dbReference>
<dbReference type="Pfam" id="PF00692">
    <property type="entry name" value="dUTPase"/>
    <property type="match status" value="1"/>
</dbReference>
<dbReference type="SUPFAM" id="SSF51283">
    <property type="entry name" value="dUTPase-like"/>
    <property type="match status" value="1"/>
</dbReference>
<keyword id="KW-0002">3D-structure</keyword>
<keyword id="KW-0378">Hydrolase</keyword>
<keyword id="KW-0460">Magnesium</keyword>
<keyword id="KW-0479">Metal-binding</keyword>
<keyword id="KW-0546">Nucleotide metabolism</keyword>
<keyword id="KW-1185">Reference proteome</keyword>
<evidence type="ECO:0000255" key="1">
    <source>
        <dbReference type="HAMAP-Rule" id="MF_00116"/>
    </source>
</evidence>
<evidence type="ECO:0000305" key="2"/>
<evidence type="ECO:0007829" key="3">
    <source>
        <dbReference type="PDB" id="3TQZ"/>
    </source>
</evidence>
<organism>
    <name type="scientific">Coxiella burnetii (strain RSA 493 / Nine Mile phase I)</name>
    <dbReference type="NCBI Taxonomy" id="227377"/>
    <lineage>
        <taxon>Bacteria</taxon>
        <taxon>Pseudomonadati</taxon>
        <taxon>Pseudomonadota</taxon>
        <taxon>Gammaproteobacteria</taxon>
        <taxon>Legionellales</taxon>
        <taxon>Coxiellaceae</taxon>
        <taxon>Coxiella</taxon>
    </lineage>
</organism>
<name>DUT_COXBU</name>
<comment type="function">
    <text evidence="1">This enzyme is involved in nucleotide metabolism: it produces dUMP, the immediate precursor of thymidine nucleotides and it decreases the intracellular concentration of dUTP so that uracil cannot be incorporated into DNA.</text>
</comment>
<comment type="catalytic activity">
    <reaction evidence="1">
        <text>dUTP + H2O = dUMP + diphosphate + H(+)</text>
        <dbReference type="Rhea" id="RHEA:10248"/>
        <dbReference type="ChEBI" id="CHEBI:15377"/>
        <dbReference type="ChEBI" id="CHEBI:15378"/>
        <dbReference type="ChEBI" id="CHEBI:33019"/>
        <dbReference type="ChEBI" id="CHEBI:61555"/>
        <dbReference type="ChEBI" id="CHEBI:246422"/>
        <dbReference type="EC" id="3.6.1.23"/>
    </reaction>
</comment>
<comment type="cofactor">
    <cofactor evidence="1">
        <name>Mg(2+)</name>
        <dbReference type="ChEBI" id="CHEBI:18420"/>
    </cofactor>
</comment>
<comment type="pathway">
    <text evidence="1">Pyrimidine metabolism; dUMP biosynthesis; dUMP from dCTP (dUTP route): step 2/2.</text>
</comment>
<comment type="similarity">
    <text evidence="1">Belongs to the dUTPase family.</text>
</comment>
<comment type="sequence caution" evidence="2">
    <conflict type="erroneous initiation">
        <sequence resource="EMBL-CDS" id="AAO89850"/>
    </conflict>
</comment>